<protein>
    <recommendedName>
        <fullName evidence="5">Thioredoxin reductase-like selenoprotein T</fullName>
        <shortName evidence="2">SelT</shortName>
        <ecNumber evidence="3">1.8.1.9</ecNumber>
    </recommendedName>
</protein>
<keyword id="KW-0256">Endoplasmic reticulum</keyword>
<keyword id="KW-0472">Membrane</keyword>
<keyword id="KW-0521">NADP</keyword>
<keyword id="KW-0560">Oxidoreductase</keyword>
<keyword id="KW-0676">Redox-active center</keyword>
<keyword id="KW-1185">Reference proteome</keyword>
<keyword id="KW-0712">Selenocysteine</keyword>
<keyword id="KW-0732">Signal</keyword>
<keyword id="KW-0812">Transmembrane</keyword>
<keyword id="KW-1133">Transmembrane helix</keyword>
<gene>
    <name evidence="2" type="primary">SELENOT</name>
    <name evidence="6" type="ORF">RCJMB04_16o1</name>
</gene>
<reference evidence="6" key="1">
    <citation type="journal article" date="2005" name="Genome Biol.">
        <title>Full-length cDNAs from chicken bursal lymphocytes to facilitate gene function analysis.</title>
        <authorList>
            <person name="Caldwell R.B."/>
            <person name="Kierzek A.M."/>
            <person name="Arakawa H."/>
            <person name="Bezzubov Y."/>
            <person name="Zaim J."/>
            <person name="Fiedler P."/>
            <person name="Kutter S."/>
            <person name="Blagodatski A."/>
            <person name="Kostovska D."/>
            <person name="Koter M."/>
            <person name="Plachy J."/>
            <person name="Carninci P."/>
            <person name="Hayashizaki Y."/>
            <person name="Buerstedde J.-M."/>
        </authorList>
    </citation>
    <scope>NUCLEOTIDE SEQUENCE [LARGE SCALE MRNA]</scope>
    <source>
        <strain evidence="6">CB</strain>
        <tissue evidence="6">Bursa of Fabricius</tissue>
    </source>
</reference>
<proteinExistence type="evidence at transcript level"/>
<evidence type="ECO:0000250" key="1"/>
<evidence type="ECO:0000250" key="2">
    <source>
        <dbReference type="UniProtKB" id="P62341"/>
    </source>
</evidence>
<evidence type="ECO:0000250" key="3">
    <source>
        <dbReference type="UniProtKB" id="Q1H5H1"/>
    </source>
</evidence>
<evidence type="ECO:0000255" key="4"/>
<evidence type="ECO:0000305" key="5"/>
<evidence type="ECO:0000312" key="6">
    <source>
        <dbReference type="EMBL" id="CAG32055.1"/>
    </source>
</evidence>
<accession>Q5ZJN8</accession>
<sequence length="199" mass="22318">MRAAGLGLGIGLLLLAALAGPGGSAEQGGVPAKKLRMAYATGPLLKFQICVSUGYRRVFEEYMRVISQRYPDIRIEGENYLPQPIYRHIASFLSVFKLVLIGLIIVGKDPFAFFGMQAPSIWQWGQENKVYACMMVFFLSNMIENQCMSTGAFEITLNDVPVWSKLESGHLPSMQQLVQILDNEMKLNVHMESMPHHRS</sequence>
<feature type="signal peptide" evidence="4">
    <location>
        <begin position="1"/>
        <end position="24"/>
    </location>
</feature>
<feature type="chain" id="PRO_0000252040" description="Thioredoxin reductase-like selenoprotein T" evidence="4">
    <location>
        <begin position="25"/>
        <end position="199"/>
    </location>
</feature>
<feature type="transmembrane region" description="Helical" evidence="4">
    <location>
        <begin position="95"/>
        <end position="115"/>
    </location>
</feature>
<feature type="non-standard amino acid" description="Selenocysteine" evidence="4">
    <location>
        <position position="53"/>
    </location>
</feature>
<feature type="cross-link" description="Cysteinyl-selenocysteine (Cys-Sec)" evidence="4">
    <location>
        <begin position="50"/>
        <end position="53"/>
    </location>
</feature>
<dbReference type="EC" id="1.8.1.9" evidence="3"/>
<dbReference type="EMBL" id="AJ720396">
    <property type="protein sequence ID" value="CAG32055.1"/>
    <property type="status" value="ALT_SEQ"/>
    <property type="molecule type" value="mRNA"/>
</dbReference>
<dbReference type="RefSeq" id="NP_001006557.3">
    <property type="nucleotide sequence ID" value="NM_001006557.4"/>
</dbReference>
<dbReference type="FunCoup" id="Q5ZJN8">
    <property type="interactions" value="475"/>
</dbReference>
<dbReference type="STRING" id="9031.ENSGALP00000016915"/>
<dbReference type="PaxDb" id="9031-ENSGALP00000016915"/>
<dbReference type="Ensembl" id="ENSGALT00010002567.1">
    <property type="protein sequence ID" value="ENSGALP00010001117.1"/>
    <property type="gene ID" value="ENSGALG00010001132.1"/>
</dbReference>
<dbReference type="GeneID" id="425041"/>
<dbReference type="KEGG" id="gga:425041"/>
<dbReference type="CTD" id="51714"/>
<dbReference type="VEuPathDB" id="HostDB:geneid_425041"/>
<dbReference type="eggNOG" id="KOG3286">
    <property type="taxonomic scope" value="Eukaryota"/>
</dbReference>
<dbReference type="GeneTree" id="ENSGT00390000011725"/>
<dbReference type="HOGENOM" id="CLU_113870_2_0_1"/>
<dbReference type="InParanoid" id="Q5ZJN8"/>
<dbReference type="OMA" id="LKFQICC"/>
<dbReference type="OrthoDB" id="60822at2759"/>
<dbReference type="PhylomeDB" id="Q5ZJN8"/>
<dbReference type="PRO" id="PR:Q5ZJN8"/>
<dbReference type="Proteomes" id="UP000000539">
    <property type="component" value="Chromosome 9"/>
</dbReference>
<dbReference type="Bgee" id="ENSGALG00000010399">
    <property type="expression patterns" value="Expressed in spermatid and 12 other cell types or tissues"/>
</dbReference>
<dbReference type="GO" id="GO:0005783">
    <property type="term" value="C:endoplasmic reticulum"/>
    <property type="evidence" value="ECO:0000250"/>
    <property type="project" value="UniProtKB"/>
</dbReference>
<dbReference type="GO" id="GO:0005789">
    <property type="term" value="C:endoplasmic reticulum membrane"/>
    <property type="evidence" value="ECO:0000250"/>
    <property type="project" value="UniProtKB"/>
</dbReference>
<dbReference type="GO" id="GO:0004791">
    <property type="term" value="F:thioredoxin-disulfide reductase (NADPH) activity"/>
    <property type="evidence" value="ECO:0000250"/>
    <property type="project" value="UniProtKB"/>
</dbReference>
<dbReference type="GO" id="GO:0045454">
    <property type="term" value="P:cell redox homeostasis"/>
    <property type="evidence" value="ECO:0000250"/>
    <property type="project" value="UniProtKB"/>
</dbReference>
<dbReference type="GO" id="GO:0098869">
    <property type="term" value="P:cellular oxidant detoxification"/>
    <property type="evidence" value="ECO:0000250"/>
    <property type="project" value="UniProtKB"/>
</dbReference>
<dbReference type="GO" id="GO:0042593">
    <property type="term" value="P:glucose homeostasis"/>
    <property type="evidence" value="ECO:0000250"/>
    <property type="project" value="UniProtKB"/>
</dbReference>
<dbReference type="GO" id="GO:0035773">
    <property type="term" value="P:insulin secretion involved in cellular response to glucose stimulus"/>
    <property type="evidence" value="ECO:0000250"/>
    <property type="project" value="UniProtKB"/>
</dbReference>
<dbReference type="GO" id="GO:0031016">
    <property type="term" value="P:pancreas development"/>
    <property type="evidence" value="ECO:0000250"/>
    <property type="project" value="UniProtKB"/>
</dbReference>
<dbReference type="GO" id="GO:0007204">
    <property type="term" value="P:positive regulation of cytosolic calcium ion concentration"/>
    <property type="evidence" value="ECO:0000250"/>
    <property type="project" value="UniProtKB"/>
</dbReference>
<dbReference type="GO" id="GO:0060124">
    <property type="term" value="P:positive regulation of growth hormone secretion"/>
    <property type="evidence" value="ECO:0000250"/>
    <property type="project" value="UniProtKB"/>
</dbReference>
<dbReference type="GO" id="GO:0009749">
    <property type="term" value="P:response to glucose"/>
    <property type="evidence" value="ECO:0000250"/>
    <property type="project" value="UniProtKB"/>
</dbReference>
<dbReference type="FunFam" id="3.40.30.10:FF:000085">
    <property type="entry name" value="Selenoprotein T"/>
    <property type="match status" value="1"/>
</dbReference>
<dbReference type="Gene3D" id="3.40.30.10">
    <property type="entry name" value="Glutaredoxin"/>
    <property type="match status" value="1"/>
</dbReference>
<dbReference type="InterPro" id="IPR011893">
    <property type="entry name" value="Selenoprotein_Rdx-typ"/>
</dbReference>
<dbReference type="InterPro" id="IPR019389">
    <property type="entry name" value="Selenoprotein_T"/>
</dbReference>
<dbReference type="InterPro" id="IPR036249">
    <property type="entry name" value="Thioredoxin-like_sf"/>
</dbReference>
<dbReference type="NCBIfam" id="TIGR02174">
    <property type="entry name" value="CXXU_selWTH"/>
    <property type="match status" value="1"/>
</dbReference>
<dbReference type="PANTHER" id="PTHR13544">
    <property type="entry name" value="SELENOPROTEIN T"/>
    <property type="match status" value="1"/>
</dbReference>
<dbReference type="PANTHER" id="PTHR13544:SF0">
    <property type="entry name" value="THIOREDOXIN REDUCTASE-LIKE SELENOPROTEIN T"/>
    <property type="match status" value="1"/>
</dbReference>
<dbReference type="Pfam" id="PF10262">
    <property type="entry name" value="Rdx"/>
    <property type="match status" value="1"/>
</dbReference>
<dbReference type="SUPFAM" id="SSF52833">
    <property type="entry name" value="Thioredoxin-like"/>
    <property type="match status" value="1"/>
</dbReference>
<name>SELT_CHICK</name>
<organism>
    <name type="scientific">Gallus gallus</name>
    <name type="common">Chicken</name>
    <dbReference type="NCBI Taxonomy" id="9031"/>
    <lineage>
        <taxon>Eukaryota</taxon>
        <taxon>Metazoa</taxon>
        <taxon>Chordata</taxon>
        <taxon>Craniata</taxon>
        <taxon>Vertebrata</taxon>
        <taxon>Euteleostomi</taxon>
        <taxon>Archelosauria</taxon>
        <taxon>Archosauria</taxon>
        <taxon>Dinosauria</taxon>
        <taxon>Saurischia</taxon>
        <taxon>Theropoda</taxon>
        <taxon>Coelurosauria</taxon>
        <taxon>Aves</taxon>
        <taxon>Neognathae</taxon>
        <taxon>Galloanserae</taxon>
        <taxon>Galliformes</taxon>
        <taxon>Phasianidae</taxon>
        <taxon>Phasianinae</taxon>
        <taxon>Gallus</taxon>
    </lineage>
</organism>
<comment type="function">
    <text evidence="3">Selenoprotein with thioredoxin reductase-like oxidoreductase activity.</text>
</comment>
<comment type="catalytic activity">
    <reaction evidence="3">
        <text>[thioredoxin]-dithiol + NADP(+) = [thioredoxin]-disulfide + NADPH + H(+)</text>
        <dbReference type="Rhea" id="RHEA:20345"/>
        <dbReference type="Rhea" id="RHEA-COMP:10698"/>
        <dbReference type="Rhea" id="RHEA-COMP:10700"/>
        <dbReference type="ChEBI" id="CHEBI:15378"/>
        <dbReference type="ChEBI" id="CHEBI:29950"/>
        <dbReference type="ChEBI" id="CHEBI:50058"/>
        <dbReference type="ChEBI" id="CHEBI:57783"/>
        <dbReference type="ChEBI" id="CHEBI:58349"/>
        <dbReference type="EC" id="1.8.1.9"/>
    </reaction>
</comment>
<comment type="subcellular location">
    <subcellularLocation>
        <location evidence="3">Endoplasmic reticulum membrane</location>
        <topology evidence="4">Single-pass membrane protein</topology>
    </subcellularLocation>
</comment>
<comment type="PTM">
    <text evidence="1">May contain a selenide-sulfide bond between Cys-50 and Sec-53. This bond is speculated to serve as redox-active pair (By similarity).</text>
</comment>
<comment type="similarity">
    <text evidence="5">Belongs to the SelWTH family. Selenoprotein T subfamily.</text>
</comment>
<comment type="sequence caution" evidence="5">
    <conflict type="erroneous termination">
        <sequence resource="EMBL-CDS" id="CAG32055"/>
    </conflict>
    <text>Truncated C-terminus.</text>
</comment>